<organism>
    <name type="scientific">Escherichia coli O157:H7</name>
    <dbReference type="NCBI Taxonomy" id="83334"/>
    <lineage>
        <taxon>Bacteria</taxon>
        <taxon>Pseudomonadati</taxon>
        <taxon>Pseudomonadota</taxon>
        <taxon>Gammaproteobacteria</taxon>
        <taxon>Enterobacterales</taxon>
        <taxon>Enterobacteriaceae</taxon>
        <taxon>Escherichia</taxon>
    </lineage>
</organism>
<name>TSAC_ECO57</name>
<gene>
    <name evidence="1" type="primary">tsaC</name>
    <name type="synonym">rimN</name>
    <name type="ordered locus">Z4653</name>
    <name type="ordered locus">ECs4148</name>
</gene>
<dbReference type="EC" id="2.7.7.87" evidence="1"/>
<dbReference type="EMBL" id="AE005174">
    <property type="protein sequence ID" value="AAG58404.1"/>
    <property type="molecule type" value="Genomic_DNA"/>
</dbReference>
<dbReference type="EMBL" id="BA000007">
    <property type="protein sequence ID" value="BAB37571.1"/>
    <property type="molecule type" value="Genomic_DNA"/>
</dbReference>
<dbReference type="PIR" id="D91147">
    <property type="entry name" value="D91147"/>
</dbReference>
<dbReference type="PIR" id="H85992">
    <property type="entry name" value="H85992"/>
</dbReference>
<dbReference type="RefSeq" id="NP_312175.1">
    <property type="nucleotide sequence ID" value="NC_002695.1"/>
</dbReference>
<dbReference type="RefSeq" id="WP_001301437.1">
    <property type="nucleotide sequence ID" value="NZ_VOAI01000078.1"/>
</dbReference>
<dbReference type="SMR" id="Q8X8F8"/>
<dbReference type="STRING" id="155864.Z4653"/>
<dbReference type="GeneID" id="915997"/>
<dbReference type="KEGG" id="ece:Z4653"/>
<dbReference type="KEGG" id="ecs:ECs_4148"/>
<dbReference type="PATRIC" id="fig|386585.9.peg.4331"/>
<dbReference type="eggNOG" id="COG0009">
    <property type="taxonomic scope" value="Bacteria"/>
</dbReference>
<dbReference type="HOGENOM" id="CLU_031397_6_0_6"/>
<dbReference type="OMA" id="LVDAFWP"/>
<dbReference type="Proteomes" id="UP000000558">
    <property type="component" value="Chromosome"/>
</dbReference>
<dbReference type="Proteomes" id="UP000002519">
    <property type="component" value="Chromosome"/>
</dbReference>
<dbReference type="GO" id="GO:0005737">
    <property type="term" value="C:cytoplasm"/>
    <property type="evidence" value="ECO:0007669"/>
    <property type="project" value="UniProtKB-SubCell"/>
</dbReference>
<dbReference type="GO" id="GO:0005524">
    <property type="term" value="F:ATP binding"/>
    <property type="evidence" value="ECO:0007669"/>
    <property type="project" value="UniProtKB-UniRule"/>
</dbReference>
<dbReference type="GO" id="GO:0003725">
    <property type="term" value="F:double-stranded RNA binding"/>
    <property type="evidence" value="ECO:0007669"/>
    <property type="project" value="InterPro"/>
</dbReference>
<dbReference type="GO" id="GO:0061710">
    <property type="term" value="F:L-threonylcarbamoyladenylate synthase"/>
    <property type="evidence" value="ECO:0007669"/>
    <property type="project" value="UniProtKB-EC"/>
</dbReference>
<dbReference type="GO" id="GO:0000049">
    <property type="term" value="F:tRNA binding"/>
    <property type="evidence" value="ECO:0007669"/>
    <property type="project" value="TreeGrafter"/>
</dbReference>
<dbReference type="GO" id="GO:0006450">
    <property type="term" value="P:regulation of translational fidelity"/>
    <property type="evidence" value="ECO:0007669"/>
    <property type="project" value="TreeGrafter"/>
</dbReference>
<dbReference type="GO" id="GO:0002949">
    <property type="term" value="P:tRNA threonylcarbamoyladenosine modification"/>
    <property type="evidence" value="ECO:0007669"/>
    <property type="project" value="UniProtKB-UniRule"/>
</dbReference>
<dbReference type="FunFam" id="3.90.870.10:FF:000004">
    <property type="entry name" value="Threonylcarbamoyl-AMP synthase"/>
    <property type="match status" value="1"/>
</dbReference>
<dbReference type="Gene3D" id="3.90.870.10">
    <property type="entry name" value="DHBP synthase"/>
    <property type="match status" value="1"/>
</dbReference>
<dbReference type="HAMAP" id="MF_01852">
    <property type="entry name" value="TsaC"/>
    <property type="match status" value="1"/>
</dbReference>
<dbReference type="InterPro" id="IPR017945">
    <property type="entry name" value="DHBP_synth_RibB-like_a/b_dom"/>
</dbReference>
<dbReference type="InterPro" id="IPR006070">
    <property type="entry name" value="Sua5-like_dom"/>
</dbReference>
<dbReference type="InterPro" id="IPR023535">
    <property type="entry name" value="TC-AMP_synthase"/>
</dbReference>
<dbReference type="InterPro" id="IPR050156">
    <property type="entry name" value="TC-AMP_synthase_SUA5"/>
</dbReference>
<dbReference type="NCBIfam" id="NF007919">
    <property type="entry name" value="PRK10634.1"/>
    <property type="match status" value="1"/>
</dbReference>
<dbReference type="PANTHER" id="PTHR17490">
    <property type="entry name" value="SUA5"/>
    <property type="match status" value="1"/>
</dbReference>
<dbReference type="PANTHER" id="PTHR17490:SF18">
    <property type="entry name" value="THREONYLCARBAMOYL-AMP SYNTHASE"/>
    <property type="match status" value="1"/>
</dbReference>
<dbReference type="Pfam" id="PF01300">
    <property type="entry name" value="Sua5_yciO_yrdC"/>
    <property type="match status" value="1"/>
</dbReference>
<dbReference type="SUPFAM" id="SSF55821">
    <property type="entry name" value="YrdC/RibB"/>
    <property type="match status" value="1"/>
</dbReference>
<dbReference type="PROSITE" id="PS51163">
    <property type="entry name" value="YRDC"/>
    <property type="match status" value="1"/>
</dbReference>
<keyword id="KW-0067">ATP-binding</keyword>
<keyword id="KW-0963">Cytoplasm</keyword>
<keyword id="KW-0547">Nucleotide-binding</keyword>
<keyword id="KW-0548">Nucleotidyltransferase</keyword>
<keyword id="KW-1185">Reference proteome</keyword>
<keyword id="KW-0808">Transferase</keyword>
<keyword id="KW-0819">tRNA processing</keyword>
<feature type="chain" id="PRO_0000352917" description="Threonylcarbamoyl-AMP synthase">
    <location>
        <begin position="1"/>
        <end position="190"/>
    </location>
</feature>
<feature type="domain" description="YrdC-like" evidence="1">
    <location>
        <begin position="7"/>
        <end position="190"/>
    </location>
</feature>
<sequence>MNNNLQGDAIAAAIDVLNEERVIAYPTEAVFGVGCDPDSETAVMRLLELKQRPVDKGLILIAANYEQLKPYIDDTMLTDVQRETIFSRWPGPVTFVFPAPATTPRWLTGRFDSLAVRVTDHPLVVALCQAYGKPLVSTSANLSGLPPCRTVDEVRAQFGAAFPVVPGETGGRLNPSEIRDALTGELFRQG</sequence>
<proteinExistence type="inferred from homology"/>
<comment type="function">
    <text evidence="1">Required for the formation of a threonylcarbamoyl group on adenosine at position 37 (t(6)A37) in tRNAs that read codons beginning with adenine. Catalyzes the conversion of L-threonine, HCO(3)(-)/CO(2) and ATP to give threonylcarbamoyl-AMP (TC-AMP) as the acyladenylate intermediate, with the release of diphosphate.</text>
</comment>
<comment type="catalytic activity">
    <reaction evidence="1">
        <text>L-threonine + hydrogencarbonate + ATP = L-threonylcarbamoyladenylate + diphosphate + H2O</text>
        <dbReference type="Rhea" id="RHEA:36407"/>
        <dbReference type="ChEBI" id="CHEBI:15377"/>
        <dbReference type="ChEBI" id="CHEBI:17544"/>
        <dbReference type="ChEBI" id="CHEBI:30616"/>
        <dbReference type="ChEBI" id="CHEBI:33019"/>
        <dbReference type="ChEBI" id="CHEBI:57926"/>
        <dbReference type="ChEBI" id="CHEBI:73682"/>
        <dbReference type="EC" id="2.7.7.87"/>
    </reaction>
</comment>
<comment type="subcellular location">
    <subcellularLocation>
        <location evidence="1">Cytoplasm</location>
    </subcellularLocation>
</comment>
<comment type="similarity">
    <text evidence="1">Belongs to the SUA5 family. TsaC subfamily.</text>
</comment>
<accession>Q8X8F8</accession>
<accession>Q7AAE0</accession>
<evidence type="ECO:0000255" key="1">
    <source>
        <dbReference type="HAMAP-Rule" id="MF_01852"/>
    </source>
</evidence>
<reference key="1">
    <citation type="journal article" date="2001" name="Nature">
        <title>Genome sequence of enterohaemorrhagic Escherichia coli O157:H7.</title>
        <authorList>
            <person name="Perna N.T."/>
            <person name="Plunkett G. III"/>
            <person name="Burland V."/>
            <person name="Mau B."/>
            <person name="Glasner J.D."/>
            <person name="Rose D.J."/>
            <person name="Mayhew G.F."/>
            <person name="Evans P.S."/>
            <person name="Gregor J."/>
            <person name="Kirkpatrick H.A."/>
            <person name="Posfai G."/>
            <person name="Hackett J."/>
            <person name="Klink S."/>
            <person name="Boutin A."/>
            <person name="Shao Y."/>
            <person name="Miller L."/>
            <person name="Grotbeck E.J."/>
            <person name="Davis N.W."/>
            <person name="Lim A."/>
            <person name="Dimalanta E.T."/>
            <person name="Potamousis K."/>
            <person name="Apodaca J."/>
            <person name="Anantharaman T.S."/>
            <person name="Lin J."/>
            <person name="Yen G."/>
            <person name="Schwartz D.C."/>
            <person name="Welch R.A."/>
            <person name="Blattner F.R."/>
        </authorList>
    </citation>
    <scope>NUCLEOTIDE SEQUENCE [LARGE SCALE GENOMIC DNA]</scope>
    <source>
        <strain>O157:H7 / EDL933 / ATCC 700927 / EHEC</strain>
    </source>
</reference>
<reference key="2">
    <citation type="journal article" date="2001" name="DNA Res.">
        <title>Complete genome sequence of enterohemorrhagic Escherichia coli O157:H7 and genomic comparison with a laboratory strain K-12.</title>
        <authorList>
            <person name="Hayashi T."/>
            <person name="Makino K."/>
            <person name="Ohnishi M."/>
            <person name="Kurokawa K."/>
            <person name="Ishii K."/>
            <person name="Yokoyama K."/>
            <person name="Han C.-G."/>
            <person name="Ohtsubo E."/>
            <person name="Nakayama K."/>
            <person name="Murata T."/>
            <person name="Tanaka M."/>
            <person name="Tobe T."/>
            <person name="Iida T."/>
            <person name="Takami H."/>
            <person name="Honda T."/>
            <person name="Sasakawa C."/>
            <person name="Ogasawara N."/>
            <person name="Yasunaga T."/>
            <person name="Kuhara S."/>
            <person name="Shiba T."/>
            <person name="Hattori M."/>
            <person name="Shinagawa H."/>
        </authorList>
    </citation>
    <scope>NUCLEOTIDE SEQUENCE [LARGE SCALE GENOMIC DNA]</scope>
    <source>
        <strain>O157:H7 / Sakai / RIMD 0509952 / EHEC</strain>
    </source>
</reference>
<protein>
    <recommendedName>
        <fullName evidence="1">Threonylcarbamoyl-AMP synthase</fullName>
        <shortName evidence="1">TC-AMP synthase</shortName>
        <ecNumber evidence="1">2.7.7.87</ecNumber>
    </recommendedName>
    <alternativeName>
        <fullName evidence="1">L-threonylcarbamoyladenylate synthase</fullName>
    </alternativeName>
    <alternativeName>
        <fullName evidence="1">t(6)A37 threonylcarbamoyladenosine biosynthesis protein TsaC</fullName>
    </alternativeName>
    <alternativeName>
        <fullName evidence="1">tRNA threonylcarbamoyladenosine biosynthesis protein TsaC</fullName>
    </alternativeName>
</protein>